<sequence>MSDINATRLPIIWAPVVPCISDDNDSTLTRGQR</sequence>
<evidence type="ECO:0000250" key="1">
    <source>
        <dbReference type="UniProtKB" id="A0A067SLB9"/>
    </source>
</evidence>
<evidence type="ECO:0000303" key="2">
    <source>
    </source>
</evidence>
<evidence type="ECO:0000305" key="3"/>
<evidence type="ECO:0000305" key="4">
    <source>
    </source>
</evidence>
<organism>
    <name type="scientific">Amanita fuliginea</name>
    <name type="common">East Asian brown death cap</name>
    <dbReference type="NCBI Taxonomy" id="67708"/>
    <lineage>
        <taxon>Eukaryota</taxon>
        <taxon>Fungi</taxon>
        <taxon>Dikarya</taxon>
        <taxon>Basidiomycota</taxon>
        <taxon>Agaricomycotina</taxon>
        <taxon>Agaricomycetes</taxon>
        <taxon>Agaricomycetidae</taxon>
        <taxon>Agaricales</taxon>
        <taxon>Pluteineae</taxon>
        <taxon>Amanitaceae</taxon>
        <taxon>Amanita</taxon>
    </lineage>
</organism>
<proteinExistence type="inferred from homology"/>
<name>MSD1_AMAFU</name>
<keyword id="KW-0800">Toxin</keyword>
<protein>
    <recommendedName>
        <fullName evidence="2">MSDIN-like toxin proprotein 1</fullName>
    </recommendedName>
    <component>
        <recommendedName>
            <fullName evidence="4">Toxin MSD1</fullName>
        </recommendedName>
    </component>
</protein>
<feature type="propeptide" id="PRO_0000443701" evidence="4">
    <location>
        <begin position="1"/>
        <end position="10"/>
    </location>
</feature>
<feature type="peptide" id="PRO_0000443702" description="Toxin MSD1" evidence="4">
    <location>
        <begin position="11"/>
        <end position="18"/>
    </location>
</feature>
<feature type="propeptide" id="PRO_0000443703" evidence="4">
    <location>
        <begin position="19"/>
        <end position="33"/>
    </location>
</feature>
<feature type="cross-link" description="Cyclopeptide (Ile-Pro)" evidence="4">
    <location>
        <begin position="11"/>
        <end position="18"/>
    </location>
</feature>
<dbReference type="EMBL" id="KF552077">
    <property type="protein sequence ID" value="AHB18705.1"/>
    <property type="molecule type" value="Genomic_DNA"/>
</dbReference>
<dbReference type="GO" id="GO:0090729">
    <property type="term" value="F:toxin activity"/>
    <property type="evidence" value="ECO:0007669"/>
    <property type="project" value="UniProtKB-KW"/>
</dbReference>
<dbReference type="InterPro" id="IPR027582">
    <property type="entry name" value="Amanitin/phalloidin"/>
</dbReference>
<dbReference type="NCBIfam" id="TIGR04309">
    <property type="entry name" value="amanitin"/>
    <property type="match status" value="1"/>
</dbReference>
<reference key="1">
    <citation type="journal article" date="2014" name="Toxicon">
        <title>The molecular diversity of toxin gene families in lethal Amanita mushrooms.</title>
        <authorList>
            <person name="Li P."/>
            <person name="Deng W."/>
            <person name="Li T."/>
        </authorList>
    </citation>
    <scope>NUCLEOTIDE SEQUENCE [GENOMIC DNA]</scope>
    <scope>FUNCTION</scope>
</reference>
<accession>A0A023IWM4</accession>
<comment type="function">
    <text evidence="4">Probable toxin that belongs to the MSDIN-like toxin family responsible for a large number of food poisoning cases and deaths (PubMed:24613547).</text>
</comment>
<comment type="PTM">
    <text evidence="1">Processed by the macrocyclase-peptidase enzyme POPB to yield a toxic cyclic octapeptide (By similarity). POPB first removes 10 residues from the N-terminus (By similarity). Conformational trapping of the remaining peptide forces the enzyme to release this intermediate rather than proceed to macrocyclization (By similarity). The enzyme rebinds the remaining peptide in a different conformation and catalyzes macrocyclization of the N-terminal 8 residues (By similarity).</text>
</comment>
<comment type="similarity">
    <text evidence="3">Belongs to the MSDIN fungal toxin family.</text>
</comment>